<evidence type="ECO:0000250" key="1"/>
<evidence type="ECO:0000255" key="2"/>
<evidence type="ECO:0000269" key="3">
    <source>
    </source>
</evidence>
<evidence type="ECO:0000269" key="4">
    <source>
    </source>
</evidence>
<evidence type="ECO:0000269" key="5">
    <source>
    </source>
</evidence>
<evidence type="ECO:0000269" key="6">
    <source>
    </source>
</evidence>
<evidence type="ECO:0000269" key="7">
    <source>
    </source>
</evidence>
<evidence type="ECO:0000269" key="8">
    <source>
    </source>
</evidence>
<evidence type="ECO:0000303" key="9">
    <source>
    </source>
</evidence>
<evidence type="ECO:0000305" key="10"/>
<evidence type="ECO:0000312" key="11">
    <source>
        <dbReference type="HGNC" id="HGNC:32068"/>
    </source>
</evidence>
<evidence type="ECO:0007744" key="12">
    <source>
    </source>
</evidence>
<evidence type="ECO:0007744" key="13">
    <source>
    </source>
</evidence>
<reference key="1">
    <citation type="journal article" date="2006" name="Nature">
        <title>The DNA sequence and biological annotation of human chromosome 1.</title>
        <authorList>
            <person name="Gregory S.G."/>
            <person name="Barlow K.F."/>
            <person name="McLay K.E."/>
            <person name="Kaul R."/>
            <person name="Swarbreck D."/>
            <person name="Dunham A."/>
            <person name="Scott C.E."/>
            <person name="Howe K.L."/>
            <person name="Woodfine K."/>
            <person name="Spencer C.C.A."/>
            <person name="Jones M.C."/>
            <person name="Gillson C."/>
            <person name="Searle S."/>
            <person name="Zhou Y."/>
            <person name="Kokocinski F."/>
            <person name="McDonald L."/>
            <person name="Evans R."/>
            <person name="Phillips K."/>
            <person name="Atkinson A."/>
            <person name="Cooper R."/>
            <person name="Jones C."/>
            <person name="Hall R.E."/>
            <person name="Andrews T.D."/>
            <person name="Lloyd C."/>
            <person name="Ainscough R."/>
            <person name="Almeida J.P."/>
            <person name="Ambrose K.D."/>
            <person name="Anderson F."/>
            <person name="Andrew R.W."/>
            <person name="Ashwell R.I.S."/>
            <person name="Aubin K."/>
            <person name="Babbage A.K."/>
            <person name="Bagguley C.L."/>
            <person name="Bailey J."/>
            <person name="Beasley H."/>
            <person name="Bethel G."/>
            <person name="Bird C.P."/>
            <person name="Bray-Allen S."/>
            <person name="Brown J.Y."/>
            <person name="Brown A.J."/>
            <person name="Buckley D."/>
            <person name="Burton J."/>
            <person name="Bye J."/>
            <person name="Carder C."/>
            <person name="Chapman J.C."/>
            <person name="Clark S.Y."/>
            <person name="Clarke G."/>
            <person name="Clee C."/>
            <person name="Cobley V."/>
            <person name="Collier R.E."/>
            <person name="Corby N."/>
            <person name="Coville G.J."/>
            <person name="Davies J."/>
            <person name="Deadman R."/>
            <person name="Dunn M."/>
            <person name="Earthrowl M."/>
            <person name="Ellington A.G."/>
            <person name="Errington H."/>
            <person name="Frankish A."/>
            <person name="Frankland J."/>
            <person name="French L."/>
            <person name="Garner P."/>
            <person name="Garnett J."/>
            <person name="Gay L."/>
            <person name="Ghori M.R.J."/>
            <person name="Gibson R."/>
            <person name="Gilby L.M."/>
            <person name="Gillett W."/>
            <person name="Glithero R.J."/>
            <person name="Grafham D.V."/>
            <person name="Griffiths C."/>
            <person name="Griffiths-Jones S."/>
            <person name="Grocock R."/>
            <person name="Hammond S."/>
            <person name="Harrison E.S.I."/>
            <person name="Hart E."/>
            <person name="Haugen E."/>
            <person name="Heath P.D."/>
            <person name="Holmes S."/>
            <person name="Holt K."/>
            <person name="Howden P.J."/>
            <person name="Hunt A.R."/>
            <person name="Hunt S.E."/>
            <person name="Hunter G."/>
            <person name="Isherwood J."/>
            <person name="James R."/>
            <person name="Johnson C."/>
            <person name="Johnson D."/>
            <person name="Joy A."/>
            <person name="Kay M."/>
            <person name="Kershaw J.K."/>
            <person name="Kibukawa M."/>
            <person name="Kimberley A.M."/>
            <person name="King A."/>
            <person name="Knights A.J."/>
            <person name="Lad H."/>
            <person name="Laird G."/>
            <person name="Lawlor S."/>
            <person name="Leongamornlert D.A."/>
            <person name="Lloyd D.M."/>
            <person name="Loveland J."/>
            <person name="Lovell J."/>
            <person name="Lush M.J."/>
            <person name="Lyne R."/>
            <person name="Martin S."/>
            <person name="Mashreghi-Mohammadi M."/>
            <person name="Matthews L."/>
            <person name="Matthews N.S.W."/>
            <person name="McLaren S."/>
            <person name="Milne S."/>
            <person name="Mistry S."/>
            <person name="Moore M.J.F."/>
            <person name="Nickerson T."/>
            <person name="O'Dell C.N."/>
            <person name="Oliver K."/>
            <person name="Palmeiri A."/>
            <person name="Palmer S.A."/>
            <person name="Parker A."/>
            <person name="Patel D."/>
            <person name="Pearce A.V."/>
            <person name="Peck A.I."/>
            <person name="Pelan S."/>
            <person name="Phelps K."/>
            <person name="Phillimore B.J."/>
            <person name="Plumb R."/>
            <person name="Rajan J."/>
            <person name="Raymond C."/>
            <person name="Rouse G."/>
            <person name="Saenphimmachak C."/>
            <person name="Sehra H.K."/>
            <person name="Sheridan E."/>
            <person name="Shownkeen R."/>
            <person name="Sims S."/>
            <person name="Skuce C.D."/>
            <person name="Smith M."/>
            <person name="Steward C."/>
            <person name="Subramanian S."/>
            <person name="Sycamore N."/>
            <person name="Tracey A."/>
            <person name="Tromans A."/>
            <person name="Van Helmond Z."/>
            <person name="Wall M."/>
            <person name="Wallis J.M."/>
            <person name="White S."/>
            <person name="Whitehead S.L."/>
            <person name="Wilkinson J.E."/>
            <person name="Willey D.L."/>
            <person name="Williams H."/>
            <person name="Wilming L."/>
            <person name="Wray P.W."/>
            <person name="Wu Z."/>
            <person name="Coulson A."/>
            <person name="Vaudin M."/>
            <person name="Sulston J.E."/>
            <person name="Durbin R.M."/>
            <person name="Hubbard T."/>
            <person name="Wooster R."/>
            <person name="Dunham I."/>
            <person name="Carter N.P."/>
            <person name="McVean G."/>
            <person name="Ross M.T."/>
            <person name="Harrow J."/>
            <person name="Olson M.V."/>
            <person name="Beck S."/>
            <person name="Rogers J."/>
            <person name="Bentley D.R."/>
        </authorList>
    </citation>
    <scope>NUCLEOTIDE SEQUENCE [LARGE SCALE GENOMIC DNA]</scope>
</reference>
<reference key="2">
    <citation type="journal article" date="2004" name="Genome Res.">
        <title>The status, quality, and expansion of the NIH full-length cDNA project: the Mammalian Gene Collection (MGC).</title>
        <authorList>
            <consortium name="The MGC Project Team"/>
        </authorList>
    </citation>
    <scope>NUCLEOTIDE SEQUENCE [LARGE SCALE MRNA] (ISOFORMS 1 AND 2)</scope>
    <source>
        <tissue>Uterus</tissue>
    </source>
</reference>
<reference key="3">
    <citation type="journal article" date="2012" name="Mol. Biol. Cell">
        <title>MINOS1 is a conserved component of mitofilin complexes and required for mitochondrial function and cristae organization.</title>
        <authorList>
            <person name="Alkhaja A.K."/>
            <person name="Jans D.C."/>
            <person name="Nikolov M."/>
            <person name="Vukotic M."/>
            <person name="Lytovchenko O."/>
            <person name="Ludewig F."/>
            <person name="Schliebs W."/>
            <person name="Riedel D."/>
            <person name="Urlaub H."/>
            <person name="Jakobs S."/>
            <person name="Deckers M."/>
        </authorList>
    </citation>
    <scope>IDENTIFICATION IN THE MICOS COMPLEX</scope>
    <scope>FUNCTION</scope>
    <scope>SUBCELLULAR LOCATION</scope>
    <scope>TOPOLOGY</scope>
</reference>
<reference key="4">
    <citation type="journal article" date="2012" name="Proc. Natl. Acad. Sci. U.S.A.">
        <title>N-terminal acetylome analyses and functional insights of the N-terminal acetyltransferase NatB.</title>
        <authorList>
            <person name="Van Damme P."/>
            <person name="Lasa M."/>
            <person name="Polevoda B."/>
            <person name="Gazquez C."/>
            <person name="Elosegui-Artola A."/>
            <person name="Kim D.S."/>
            <person name="De Juan-Pardo E."/>
            <person name="Demeyer K."/>
            <person name="Hole K."/>
            <person name="Larrea E."/>
            <person name="Timmerman E."/>
            <person name="Prieto J."/>
            <person name="Arnesen T."/>
            <person name="Sherman F."/>
            <person name="Gevaert K."/>
            <person name="Aldabe R."/>
        </authorList>
    </citation>
    <scope>ACETYLATION [LARGE SCALE ANALYSIS] AT SER-2</scope>
    <scope>CLEAVAGE OF INITIATOR METHIONINE [LARGE SCALE ANALYSIS]</scope>
    <scope>IDENTIFICATION BY MASS SPECTROMETRY [LARGE SCALE ANALYSIS]</scope>
</reference>
<reference key="5">
    <citation type="journal article" date="2014" name="J. Cell Biol.">
        <title>Uniform nomenclature for the mitochondrial contact site and cristae organizing system.</title>
        <authorList>
            <person name="Pfanner N."/>
            <person name="van der Laan M."/>
            <person name="Amati P."/>
            <person name="Capaldi R.A."/>
            <person name="Caudy A.A."/>
            <person name="Chacinska A."/>
            <person name="Darshi M."/>
            <person name="Deckers M."/>
            <person name="Hoppins S."/>
            <person name="Icho T."/>
            <person name="Jakobs S."/>
            <person name="Ji J."/>
            <person name="Kozjak-Pavlovic V."/>
            <person name="Meisinger C."/>
            <person name="Odgren P.R."/>
            <person name="Park S.K."/>
            <person name="Rehling P."/>
            <person name="Reichert A.S."/>
            <person name="Sheikh M.S."/>
            <person name="Taylor S.S."/>
            <person name="Tsuchida N."/>
            <person name="van der Bliek A.M."/>
            <person name="van der Klei I.J."/>
            <person name="Weissman J.S."/>
            <person name="Westermann B."/>
            <person name="Zha J."/>
            <person name="Neupert W."/>
            <person name="Nunnari J."/>
        </authorList>
    </citation>
    <scope>NOMENCLATURE</scope>
</reference>
<reference key="6">
    <citation type="journal article" date="2015" name="Biochim. Biophys. Acta">
        <title>The non-glycosylated isoform of MIC26 is a constituent of the mammalian MICOS complex and promotes formation of crista junctions.</title>
        <authorList>
            <person name="Koob S."/>
            <person name="Barrera M."/>
            <person name="Anand R."/>
            <person name="Reichert A.S."/>
        </authorList>
    </citation>
    <scope>INTERACTION WITH APOO; APOOL AND IMMT</scope>
</reference>
<reference key="7">
    <citation type="journal article" date="2015" name="Elife">
        <title>QIL1 is a novel mitochondrial protein required for MICOS complex stability and cristae morphology.</title>
        <authorList>
            <person name="Guarani V."/>
            <person name="McNeill E.M."/>
            <person name="Paulo J.A."/>
            <person name="Huttlin E.L."/>
            <person name="Froehlich F."/>
            <person name="Gygi S.P."/>
            <person name="Van Vactor D."/>
            <person name="Harper J.W."/>
        </authorList>
    </citation>
    <scope>INTERACTION WITH MICOS13 AND IMMT</scope>
</reference>
<reference key="8">
    <citation type="journal article" date="2015" name="Proteomics">
        <title>N-terminome analysis of the human mitochondrial proteome.</title>
        <authorList>
            <person name="Vaca Jacome A.S."/>
            <person name="Rabilloud T."/>
            <person name="Schaeffer-Reiss C."/>
            <person name="Rompais M."/>
            <person name="Ayoub D."/>
            <person name="Lane L."/>
            <person name="Bairoch A."/>
            <person name="Van Dorsselaer A."/>
            <person name="Carapito C."/>
        </authorList>
    </citation>
    <scope>ACETYLATION [LARGE SCALE ANALYSIS] AT SER-2</scope>
    <scope>CLEAVAGE OF INITIATOR METHIONINE [LARGE SCALE ANALYSIS]</scope>
    <scope>IDENTIFICATION BY MASS SPECTROMETRY [LARGE SCALE ANALYSIS]</scope>
</reference>
<reference key="9">
    <citation type="journal article" date="2019" name="PLoS ONE">
        <title>Armadillo repeat-containing protein 1 is a dual localization protein associated with mitochondrial intermembrane space bridging complex.</title>
        <authorList>
            <person name="Wagner F."/>
            <person name="Kunz T.C."/>
            <person name="Chowdhury S.R."/>
            <person name="Thiede B."/>
            <person name="Fraunholz M."/>
            <person name="Eger D."/>
            <person name="Kozjak-Pavlovic V."/>
        </authorList>
    </citation>
    <scope>INTERACTION WITH ARMC1</scope>
</reference>
<reference key="10">
    <citation type="journal article" date="2020" name="Cell Death Dis.">
        <title>OPA1 and MICOS Regulate mitochondrial crista dynamics and formation.</title>
        <authorList>
            <person name="Hu C."/>
            <person name="Shu L."/>
            <person name="Huang X."/>
            <person name="Yu J."/>
            <person name="Li L."/>
            <person name="Gong L."/>
            <person name="Yang M."/>
            <person name="Wu Z."/>
            <person name="Gao Z."/>
            <person name="Zhao Y."/>
            <person name="Chen L."/>
            <person name="Song Z."/>
        </authorList>
    </citation>
    <scope>FUNCTION</scope>
</reference>
<reference key="11">
    <citation type="journal article" date="2020" name="EMBO J.">
        <title>MICOS assembly controls mitochondrial inner membrane remodeling and crista junction redistribution to mediate cristae formation.</title>
        <authorList>
            <person name="Stephan T."/>
            <person name="Brueser C."/>
            <person name="Deckers M."/>
            <person name="Steyer A.M."/>
            <person name="Balzarotti F."/>
            <person name="Barbot M."/>
            <person name="Behr T.S."/>
            <person name="Heim G."/>
            <person name="Huebner W."/>
            <person name="Ilgen P."/>
            <person name="Lange F."/>
            <person name="Pacheu-Grau D."/>
            <person name="Pape J.K."/>
            <person name="Stoldt S."/>
            <person name="Huser T."/>
            <person name="Hell S.W."/>
            <person name="Moebius W."/>
            <person name="Rehling P."/>
            <person name="Riedel D."/>
            <person name="Jakobs S."/>
        </authorList>
    </citation>
    <scope>FUNCTION</scope>
</reference>
<proteinExistence type="evidence at protein level"/>
<comment type="function">
    <text evidence="3 7 8">Component of the MICOS complex, a large protein complex of the mitochondrial inner membrane that plays crucial roles in the maintenance of crista junctions, inner membrane architecture, and formation of contact sites to the outer membrane.</text>
</comment>
<comment type="subunit">
    <text evidence="3 4 5 6">Component of the mitochondrial contact site and cristae organizing system (MICOS) complex, composed of at least MICOS10/MIC10, CHCHD3/MIC19, CHCHD6/MIC25, APOOL/MIC27, IMMT/MIC60, APOO/MIC23/MIC26 and MICOS13/MIC13. This complex was also known under the names MINOS or MitOS complex. The MICOS complex associates with mitochondrial outer membrane proteins SAMM50, MTX1 and MTX2 (together described as components of the mitochondrial outer membrane sorting assembly machinery (SAM) complex) and DNAJC11, mitochondrial inner membrane protein TMEM11 and with HSPA9. The MICOS and SAM complexes together with DNAJC11 are part of a large protein complex spanning both membranes termed the mitochondrial intermembrane space bridging (MIB) complex. Interacts with IMMT/MIC60 and MICOS13/MIC13. Interacts with APOO/MIC23/MIC26 and APOOL/MIC27. Interacts with ARMC1 (PubMed:31644573).</text>
</comment>
<comment type="interaction">
    <interactant intactId="EBI-12886442">
        <id>Q5TGZ0</id>
    </interactant>
    <interactant intactId="EBI-18302142">
        <id>P55056</id>
        <label>APOC4</label>
    </interactant>
    <organismsDiffer>false</organismsDiffer>
    <experiments>3</experiments>
</comment>
<comment type="interaction">
    <interactant intactId="EBI-12886442">
        <id>Q5TGZ0</id>
    </interactant>
    <interactant intactId="EBI-7062247">
        <id>Q9UHD4</id>
        <label>CIDEB</label>
    </interactant>
    <organismsDiffer>false</organismsDiffer>
    <experiments>3</experiments>
</comment>
<comment type="interaction">
    <interactant intactId="EBI-12886442">
        <id>Q5TGZ0</id>
    </interactant>
    <interactant intactId="EBI-719403">
        <id>O95563</id>
        <label>MPC2</label>
    </interactant>
    <organismsDiffer>false</organismsDiffer>
    <experiments>3</experiments>
</comment>
<comment type="subcellular location">
    <subcellularLocation>
        <location evidence="3">Mitochondrion inner membrane</location>
        <topology evidence="3">Single-pass membrane protein</topology>
    </subcellularLocation>
    <text evidence="1 3">The C-terminus is located in the intermembrane space (By similarity), while the location of the N-terminus has not been determined yet. As some programs predict the presence of 2 closely apposed membrane domains, it has been proposed that the protein may cross the membrane twice and that both termini may face the intermembrane space (PubMed:22114354).</text>
</comment>
<comment type="alternative products">
    <event type="alternative splicing"/>
    <isoform>
        <id>Q5TGZ0-1</id>
        <name>1</name>
        <sequence type="displayed"/>
    </isoform>
    <isoform>
        <id>Q5TGZ0-2</id>
        <name>2</name>
        <sequence type="described" ref="VSP_042062 VSP_042063"/>
    </isoform>
</comment>
<comment type="similarity">
    <text evidence="10">Belongs to the MICOS complex subunit Mic10 family.</text>
</comment>
<comment type="sequence caution" evidence="10">
    <conflict type="erroneous initiation">
        <sequence resource="EMBL-CDS" id="AAH09927"/>
    </conflict>
    <text>Extended N-terminus.</text>
</comment>
<feature type="initiator methionine" description="Removed" evidence="12 13">
    <location>
        <position position="1"/>
    </location>
</feature>
<feature type="chain" id="PRO_0000249459" description="MICOS complex subunit MIC10">
    <location>
        <begin position="2"/>
        <end position="78"/>
    </location>
</feature>
<feature type="transmembrane region" description="Helical" evidence="2">
    <location>
        <begin position="17"/>
        <end position="36"/>
    </location>
</feature>
<feature type="topological domain" description="Mitochondrial intermembrane" evidence="2">
    <location>
        <begin position="37"/>
        <end position="78"/>
    </location>
</feature>
<feature type="modified residue" description="N-acetylserine" evidence="12 13">
    <location>
        <position position="2"/>
    </location>
</feature>
<feature type="splice variant" id="VSP_042062" description="In isoform 2." evidence="9">
    <original>GTG</original>
    <variation>ESW</variation>
    <location>
        <begin position="22"/>
        <end position="24"/>
    </location>
</feature>
<feature type="splice variant" id="VSP_042063" description="In isoform 2." evidence="9">
    <location>
        <begin position="25"/>
        <end position="78"/>
    </location>
</feature>
<keyword id="KW-0007">Acetylation</keyword>
<keyword id="KW-0025">Alternative splicing</keyword>
<keyword id="KW-0472">Membrane</keyword>
<keyword id="KW-0496">Mitochondrion</keyword>
<keyword id="KW-0999">Mitochondrion inner membrane</keyword>
<keyword id="KW-1267">Proteomics identification</keyword>
<keyword id="KW-1185">Reference proteome</keyword>
<keyword id="KW-0812">Transmembrane</keyword>
<keyword id="KW-1133">Transmembrane helix</keyword>
<accession>Q5TGZ0</accession>
<accession>Q96G68</accession>
<organism>
    <name type="scientific">Homo sapiens</name>
    <name type="common">Human</name>
    <dbReference type="NCBI Taxonomy" id="9606"/>
    <lineage>
        <taxon>Eukaryota</taxon>
        <taxon>Metazoa</taxon>
        <taxon>Chordata</taxon>
        <taxon>Craniata</taxon>
        <taxon>Vertebrata</taxon>
        <taxon>Euteleostomi</taxon>
        <taxon>Mammalia</taxon>
        <taxon>Eutheria</taxon>
        <taxon>Euarchontoglires</taxon>
        <taxon>Primates</taxon>
        <taxon>Haplorrhini</taxon>
        <taxon>Catarrhini</taxon>
        <taxon>Hominidae</taxon>
        <taxon>Homo</taxon>
    </lineage>
</organism>
<name>MIC10_HUMAN</name>
<dbReference type="EMBL" id="AL031727">
    <property type="status" value="NOT_ANNOTATED_CDS"/>
    <property type="molecule type" value="Genomic_DNA"/>
</dbReference>
<dbReference type="EMBL" id="BC009927">
    <property type="protein sequence ID" value="AAH09927.1"/>
    <property type="status" value="ALT_INIT"/>
    <property type="molecule type" value="mRNA"/>
</dbReference>
<dbReference type="EMBL" id="BC070388">
    <property type="protein sequence ID" value="AAH70388.1"/>
    <property type="molecule type" value="mRNA"/>
</dbReference>
<dbReference type="CCDS" id="CCDS30620.1">
    <molecule id="Q5TGZ0-1"/>
</dbReference>
<dbReference type="RefSeq" id="NP_001027535.1">
    <molecule id="Q5TGZ0-1"/>
    <property type="nucleotide sequence ID" value="NM_001032363.4"/>
</dbReference>
<dbReference type="BioGRID" id="136699">
    <property type="interactions" value="83"/>
</dbReference>
<dbReference type="ComplexPortal" id="CPX-6141">
    <property type="entry name" value="MICOS mitochondrial contact site and cristae organizing system complex"/>
</dbReference>
<dbReference type="CORUM" id="Q5TGZ0"/>
<dbReference type="FunCoup" id="Q5TGZ0">
    <property type="interactions" value="545"/>
</dbReference>
<dbReference type="IntAct" id="Q5TGZ0">
    <property type="interactions" value="3"/>
</dbReference>
<dbReference type="STRING" id="9606.ENSP00000325562"/>
<dbReference type="ChEMBL" id="CHEMBL4105956"/>
<dbReference type="TCDB" id="8.A.156.1.2">
    <property type="family name" value="the micos complex (micos-c) family"/>
</dbReference>
<dbReference type="iPTMnet" id="Q5TGZ0"/>
<dbReference type="PhosphoSitePlus" id="Q5TGZ0"/>
<dbReference type="SwissPalm" id="Q5TGZ0"/>
<dbReference type="BioMuta" id="MINOS1"/>
<dbReference type="DMDM" id="74746535"/>
<dbReference type="jPOST" id="Q5TGZ0"/>
<dbReference type="MassIVE" id="Q5TGZ0"/>
<dbReference type="PaxDb" id="9606-ENSP00000325562"/>
<dbReference type="PeptideAtlas" id="Q5TGZ0"/>
<dbReference type="ProteomicsDB" id="65135">
    <molecule id="Q5TGZ0-1"/>
</dbReference>
<dbReference type="ProteomicsDB" id="65136">
    <molecule id="Q5TGZ0-2"/>
</dbReference>
<dbReference type="Pumba" id="Q5TGZ0"/>
<dbReference type="TopDownProteomics" id="Q5TGZ0-1">
    <molecule id="Q5TGZ0-1"/>
</dbReference>
<dbReference type="Antibodypedia" id="29686">
    <property type="antibodies" value="95 antibodies from 16 providers"/>
</dbReference>
<dbReference type="DNASU" id="440574"/>
<dbReference type="Ensembl" id="ENST00000322753.7">
    <molecule id="Q5TGZ0-1"/>
    <property type="protein sequence ID" value="ENSP00000325562.6"/>
    <property type="gene ID" value="ENSG00000173436.15"/>
</dbReference>
<dbReference type="GeneID" id="440574"/>
<dbReference type="KEGG" id="hsa:440574"/>
<dbReference type="MANE-Select" id="ENST00000322753.7">
    <property type="protein sequence ID" value="ENSP00000325562.6"/>
    <property type="RefSeq nucleotide sequence ID" value="NM_001032363.4"/>
    <property type="RefSeq protein sequence ID" value="NP_001027535.1"/>
</dbReference>
<dbReference type="UCSC" id="uc001bci.3">
    <molecule id="Q5TGZ0-1"/>
    <property type="organism name" value="human"/>
</dbReference>
<dbReference type="AGR" id="HGNC:32068"/>
<dbReference type="CTD" id="440574"/>
<dbReference type="DisGeNET" id="440574"/>
<dbReference type="GeneCards" id="MICOS10"/>
<dbReference type="HGNC" id="HGNC:32068">
    <property type="gene designation" value="MICOS10"/>
</dbReference>
<dbReference type="HPA" id="ENSG00000173436">
    <property type="expression patterns" value="Low tissue specificity"/>
</dbReference>
<dbReference type="MalaCards" id="MICOS10"/>
<dbReference type="MIM" id="616574">
    <property type="type" value="gene"/>
</dbReference>
<dbReference type="neXtProt" id="NX_Q5TGZ0"/>
<dbReference type="PharmGKB" id="PA142672468"/>
<dbReference type="VEuPathDB" id="HostDB:ENSG00000173436"/>
<dbReference type="eggNOG" id="KOG4604">
    <property type="taxonomic scope" value="Eukaryota"/>
</dbReference>
<dbReference type="GeneTree" id="ENSGT00390000005732"/>
<dbReference type="HOGENOM" id="CLU_068905_2_1_1"/>
<dbReference type="InParanoid" id="Q5TGZ0"/>
<dbReference type="OMA" id="DEHGRKW"/>
<dbReference type="OrthoDB" id="1916310at2759"/>
<dbReference type="PAN-GO" id="Q5TGZ0">
    <property type="GO annotations" value="1 GO annotation based on evolutionary models"/>
</dbReference>
<dbReference type="PhylomeDB" id="Q5TGZ0"/>
<dbReference type="TreeFam" id="TF300259"/>
<dbReference type="PathwayCommons" id="Q5TGZ0"/>
<dbReference type="Reactome" id="R-HSA-8949613">
    <property type="pathway name" value="Cristae formation"/>
</dbReference>
<dbReference type="SignaLink" id="Q5TGZ0"/>
<dbReference type="BioGRID-ORCS" id="440574">
    <property type="hits" value="344 hits in 1084 CRISPR screens"/>
</dbReference>
<dbReference type="ChiTaRS" id="MINOS1">
    <property type="organism name" value="human"/>
</dbReference>
<dbReference type="GenomeRNAi" id="440574"/>
<dbReference type="Pharos" id="Q5TGZ0">
    <property type="development level" value="Tbio"/>
</dbReference>
<dbReference type="PRO" id="PR:Q5TGZ0"/>
<dbReference type="Proteomes" id="UP000005640">
    <property type="component" value="Chromosome 1"/>
</dbReference>
<dbReference type="RNAct" id="Q5TGZ0">
    <property type="molecule type" value="protein"/>
</dbReference>
<dbReference type="Bgee" id="ENSG00000173436">
    <property type="expression patterns" value="Expressed in mucosa of transverse colon and 146 other cell types or tissues"/>
</dbReference>
<dbReference type="ExpressionAtlas" id="Q5TGZ0">
    <property type="expression patterns" value="baseline and differential"/>
</dbReference>
<dbReference type="GO" id="GO:0140275">
    <property type="term" value="C:MIB complex"/>
    <property type="evidence" value="ECO:0007005"/>
    <property type="project" value="UniProtKB"/>
</dbReference>
<dbReference type="GO" id="GO:0061617">
    <property type="term" value="C:MICOS complex"/>
    <property type="evidence" value="ECO:0007005"/>
    <property type="project" value="UniProtKB"/>
</dbReference>
<dbReference type="GO" id="GO:0044284">
    <property type="term" value="C:mitochondrial crista junction"/>
    <property type="evidence" value="ECO:0000303"/>
    <property type="project" value="ComplexPortal"/>
</dbReference>
<dbReference type="GO" id="GO:0005743">
    <property type="term" value="C:mitochondrial inner membrane"/>
    <property type="evidence" value="ECO:0000303"/>
    <property type="project" value="ComplexPortal"/>
</dbReference>
<dbReference type="GO" id="GO:0005739">
    <property type="term" value="C:mitochondrion"/>
    <property type="evidence" value="ECO:0000314"/>
    <property type="project" value="HPA"/>
</dbReference>
<dbReference type="GO" id="GO:0001401">
    <property type="term" value="C:SAM complex"/>
    <property type="evidence" value="ECO:0007005"/>
    <property type="project" value="UniProtKB"/>
</dbReference>
<dbReference type="GO" id="GO:0042407">
    <property type="term" value="P:cristae formation"/>
    <property type="evidence" value="ECO:0000315"/>
    <property type="project" value="UniProtKB"/>
</dbReference>
<dbReference type="GO" id="GO:0007007">
    <property type="term" value="P:inner mitochondrial membrane organization"/>
    <property type="evidence" value="ECO:0000305"/>
    <property type="project" value="UniProtKB"/>
</dbReference>
<dbReference type="InterPro" id="IPR007512">
    <property type="entry name" value="Mic10"/>
</dbReference>
<dbReference type="PANTHER" id="PTHR21304">
    <property type="entry name" value="MICOS COMPLEX SUBUNIT MIC10"/>
    <property type="match status" value="1"/>
</dbReference>
<dbReference type="PANTHER" id="PTHR21304:SF0">
    <property type="entry name" value="MICOS COMPLEX SUBUNIT MIC10"/>
    <property type="match status" value="1"/>
</dbReference>
<dbReference type="Pfam" id="PF04418">
    <property type="entry name" value="DUF543"/>
    <property type="match status" value="1"/>
</dbReference>
<protein>
    <recommendedName>
        <fullName evidence="10">MICOS complex subunit MIC10</fullName>
    </recommendedName>
    <alternativeName>
        <fullName>Mitochondrial inner membrane organizing system protein 1</fullName>
    </alternativeName>
</protein>
<sequence>MSESELGRKWDRCLADAVVKIGTGFGLGIVFSLTFFKRRMWPLAFGSGMGLGMAYSNCQHDFQAPYLLHGKYVKEQEQ</sequence>
<gene>
    <name evidence="11" type="primary">MICOS10</name>
    <name type="synonym">C1orf151</name>
    <name type="synonym">MIC10</name>
    <name evidence="11" type="synonym">MINOS1</name>
</gene>